<name>H33_DANRE</name>
<dbReference type="EMBL" id="BC045982">
    <property type="protein sequence ID" value="AAH45982.1"/>
    <property type="molecule type" value="mRNA"/>
</dbReference>
<dbReference type="EMBL" id="BC049017">
    <property type="protein sequence ID" value="AAH49017.1"/>
    <property type="molecule type" value="mRNA"/>
</dbReference>
<dbReference type="EMBL" id="BC057444">
    <property type="protein sequence ID" value="AAH57444.1"/>
    <property type="molecule type" value="mRNA"/>
</dbReference>
<dbReference type="EMBL" id="BC071406">
    <property type="protein sequence ID" value="AAH71406.1"/>
    <property type="molecule type" value="mRNA"/>
</dbReference>
<dbReference type="EMBL" id="BC092854">
    <property type="protein sequence ID" value="AAH92854.1"/>
    <property type="molecule type" value="mRNA"/>
</dbReference>
<dbReference type="EMBL" id="BC152134">
    <property type="protein sequence ID" value="AAI52135.1"/>
    <property type="molecule type" value="mRNA"/>
</dbReference>
<dbReference type="EMBL" id="BC154269">
    <property type="protein sequence ID" value="AAI54270.1"/>
    <property type="molecule type" value="mRNA"/>
</dbReference>
<dbReference type="RefSeq" id="NP_001017599.1">
    <property type="nucleotide sequence ID" value="NM_001017599.1"/>
</dbReference>
<dbReference type="RefSeq" id="NP_956297.1">
    <property type="nucleotide sequence ID" value="NM_200003.1"/>
</dbReference>
<dbReference type="RefSeq" id="NP_957395.1">
    <property type="nucleotide sequence ID" value="NM_201101.1"/>
</dbReference>
<dbReference type="RefSeq" id="NP_998161.1">
    <property type="nucleotide sequence ID" value="NM_212996.1"/>
</dbReference>
<dbReference type="RefSeq" id="XP_002664801.1">
    <property type="nucleotide sequence ID" value="XM_002664755.5"/>
</dbReference>
<dbReference type="RefSeq" id="XP_009290278.1">
    <property type="nucleotide sequence ID" value="XM_009292003.2"/>
</dbReference>
<dbReference type="RefSeq" id="XP_017209248.1">
    <property type="nucleotide sequence ID" value="XM_017353759.1"/>
</dbReference>
<dbReference type="SMR" id="Q6PI20"/>
<dbReference type="BioGRID" id="95374">
    <property type="interactions" value="1"/>
</dbReference>
<dbReference type="FunCoup" id="Q6PI20">
    <property type="interactions" value="3068"/>
</dbReference>
<dbReference type="STRING" id="7955.ENSDARP00000089753"/>
<dbReference type="PaxDb" id="7955-ENSDARP00000047268"/>
<dbReference type="Ensembl" id="ENSDART00000047269">
    <property type="protein sequence ID" value="ENSDARP00000047268"/>
    <property type="gene ID" value="ENSDARG00000033009"/>
</dbReference>
<dbReference type="Ensembl" id="ENSDART00000098982">
    <property type="protein sequence ID" value="ENSDARP00000089753"/>
    <property type="gene ID" value="ENSDARG00000068436"/>
</dbReference>
<dbReference type="Ensembl" id="ENSDART00000137017">
    <property type="protein sequence ID" value="ENSDARP00000117879"/>
    <property type="gene ID" value="ENSDARG00000045248"/>
</dbReference>
<dbReference type="Ensembl" id="ENSDART00000146211">
    <property type="protein sequence ID" value="ENSDARP00000120344"/>
    <property type="gene ID" value="ENSDARG00000020504"/>
</dbReference>
<dbReference type="Ensembl" id="ENSDART00000151594">
    <property type="protein sequence ID" value="ENSDARP00000125972"/>
    <property type="gene ID" value="ENSDARG00000068436"/>
</dbReference>
<dbReference type="Ensembl" id="ENSDART00000151600">
    <property type="protein sequence ID" value="ENSDARP00000126130"/>
    <property type="gene ID" value="ENSDARG00000068434"/>
</dbReference>
<dbReference type="Ensembl" id="ENSDART00000188898">
    <property type="protein sequence ID" value="ENSDARP00000157380"/>
    <property type="gene ID" value="ENSDARG00000111005"/>
</dbReference>
<dbReference type="Ensembl" id="ENSDART00000192849">
    <property type="protein sequence ID" value="ENSDARP00000154528"/>
    <property type="gene ID" value="ENSDARG00000020504"/>
</dbReference>
<dbReference type="Ensembl" id="ENSDART00000193606">
    <property type="protein sequence ID" value="ENSDARP00000148220"/>
    <property type="gene ID" value="ENSDARG00000033009"/>
</dbReference>
<dbReference type="GeneID" id="336231"/>
<dbReference type="GeneID" id="394076"/>
<dbReference type="GeneID" id="406269"/>
<dbReference type="GeneID" id="550262"/>
<dbReference type="KEGG" id="dre:336231"/>
<dbReference type="KEGG" id="dre:394076"/>
<dbReference type="KEGG" id="dre:406269"/>
<dbReference type="KEGG" id="dre:550262"/>
<dbReference type="CTD" id="15078"/>
<dbReference type="CTD" id="394076"/>
<dbReference type="CTD" id="550262"/>
<dbReference type="CTD" id="625328"/>
<dbReference type="eggNOG" id="KOG1745">
    <property type="taxonomic scope" value="Eukaryota"/>
</dbReference>
<dbReference type="HOGENOM" id="CLU_078295_4_0_1"/>
<dbReference type="InParanoid" id="Q6PI20"/>
<dbReference type="OMA" id="WIRRTKQ"/>
<dbReference type="OrthoDB" id="10013248at2759"/>
<dbReference type="PhylomeDB" id="Q6PI20"/>
<dbReference type="TreeFam" id="TF314241"/>
<dbReference type="Reactome" id="R-DRE-212300">
    <property type="pathway name" value="PRC2 methylates histones and DNA"/>
</dbReference>
<dbReference type="Reactome" id="R-DRE-2559580">
    <property type="pathway name" value="Oxidative Stress Induced Senescence"/>
</dbReference>
<dbReference type="Reactome" id="R-DRE-427413">
    <property type="pathway name" value="NoRC negatively regulates rRNA expression"/>
</dbReference>
<dbReference type="Reactome" id="R-DRE-5625886">
    <property type="pathway name" value="Activated PKN1 stimulates transcription of AR (androgen receptor) regulated genes KLK2 and KLK3"/>
</dbReference>
<dbReference type="Reactome" id="R-DRE-73728">
    <property type="pathway name" value="RNA Polymerase I Promoter Opening"/>
</dbReference>
<dbReference type="Reactome" id="R-DRE-8936459">
    <property type="pathway name" value="RUNX1 regulates genes involved in megakaryocyte differentiation and platelet function"/>
</dbReference>
<dbReference type="Reactome" id="R-DRE-9018519">
    <property type="pathway name" value="Estrogen-dependent gene expression"/>
</dbReference>
<dbReference type="Reactome" id="R-DRE-983231">
    <property type="pathway name" value="Factors involved in megakaryocyte development and platelet production"/>
</dbReference>
<dbReference type="Reactome" id="R-DRE-9841922">
    <property type="pathway name" value="MLL4 and MLL3 complexes regulate expression of PPARG target genes in adipogenesis and hepatic steatosis"/>
</dbReference>
<dbReference type="Reactome" id="R-DRE-9843940">
    <property type="pathway name" value="Regulation of endogenous retroelements by KRAB-ZFP proteins"/>
</dbReference>
<dbReference type="Reactome" id="R-DRE-9843970">
    <property type="pathway name" value="Regulation of endogenous retroelements by the Human Silencing Hub (HUSH) complex"/>
</dbReference>
<dbReference type="PRO" id="PR:Q6PI20"/>
<dbReference type="Proteomes" id="UP000000437">
    <property type="component" value="Alternate scaffold 5"/>
</dbReference>
<dbReference type="Proteomes" id="UP000000437">
    <property type="component" value="Chromosome 15"/>
</dbReference>
<dbReference type="Proteomes" id="UP000000437">
    <property type="component" value="Chromosome 24"/>
</dbReference>
<dbReference type="Proteomes" id="UP000000437">
    <property type="component" value="Chromosome 3"/>
</dbReference>
<dbReference type="Proteomes" id="UP000000437">
    <property type="component" value="Chromosome 5"/>
</dbReference>
<dbReference type="Bgee" id="ENSDARG00000020504">
    <property type="expression patterns" value="Expressed in gastrula and 29 other cell types or tissues"/>
</dbReference>
<dbReference type="ExpressionAtlas" id="Q6PI20">
    <property type="expression patterns" value="baseline and differential"/>
</dbReference>
<dbReference type="GO" id="GO:0000786">
    <property type="term" value="C:nucleosome"/>
    <property type="evidence" value="ECO:0007669"/>
    <property type="project" value="UniProtKB-KW"/>
</dbReference>
<dbReference type="GO" id="GO:0005634">
    <property type="term" value="C:nucleus"/>
    <property type="evidence" value="ECO:0000318"/>
    <property type="project" value="GO_Central"/>
</dbReference>
<dbReference type="GO" id="GO:0003677">
    <property type="term" value="F:DNA binding"/>
    <property type="evidence" value="ECO:0007669"/>
    <property type="project" value="UniProtKB-KW"/>
</dbReference>
<dbReference type="GO" id="GO:0046982">
    <property type="term" value="F:protein heterodimerization activity"/>
    <property type="evidence" value="ECO:0007669"/>
    <property type="project" value="InterPro"/>
</dbReference>
<dbReference type="GO" id="GO:0030527">
    <property type="term" value="F:structural constituent of chromatin"/>
    <property type="evidence" value="ECO:0007669"/>
    <property type="project" value="InterPro"/>
</dbReference>
<dbReference type="CDD" id="cd22911">
    <property type="entry name" value="HFD_H3"/>
    <property type="match status" value="1"/>
</dbReference>
<dbReference type="FunFam" id="1.10.20.10:FF:000078">
    <property type="entry name" value="Histone H3"/>
    <property type="match status" value="1"/>
</dbReference>
<dbReference type="FunFam" id="1.10.20.10:FF:000044">
    <property type="entry name" value="Histone H3.3"/>
    <property type="match status" value="1"/>
</dbReference>
<dbReference type="Gene3D" id="1.10.20.10">
    <property type="entry name" value="Histone, subunit A"/>
    <property type="match status" value="1"/>
</dbReference>
<dbReference type="InterPro" id="IPR009072">
    <property type="entry name" value="Histone-fold"/>
</dbReference>
<dbReference type="InterPro" id="IPR007125">
    <property type="entry name" value="Histone_H2A/H2B/H3"/>
</dbReference>
<dbReference type="InterPro" id="IPR000164">
    <property type="entry name" value="Histone_H3/CENP-A"/>
</dbReference>
<dbReference type="PANTHER" id="PTHR11426">
    <property type="entry name" value="HISTONE H3"/>
    <property type="match status" value="1"/>
</dbReference>
<dbReference type="Pfam" id="PF00125">
    <property type="entry name" value="Histone"/>
    <property type="match status" value="1"/>
</dbReference>
<dbReference type="PRINTS" id="PR00622">
    <property type="entry name" value="HISTONEH3"/>
</dbReference>
<dbReference type="SMART" id="SM00428">
    <property type="entry name" value="H3"/>
    <property type="match status" value="1"/>
</dbReference>
<dbReference type="SUPFAM" id="SSF47113">
    <property type="entry name" value="Histone-fold"/>
    <property type="match status" value="1"/>
</dbReference>
<dbReference type="PROSITE" id="PS00322">
    <property type="entry name" value="HISTONE_H3_1"/>
    <property type="match status" value="1"/>
</dbReference>
<dbReference type="PROSITE" id="PS00959">
    <property type="entry name" value="HISTONE_H3_2"/>
    <property type="match status" value="1"/>
</dbReference>
<reference key="1">
    <citation type="submission" date="2007-10" db="EMBL/GenBank/DDBJ databases">
        <authorList>
            <consortium name="NIH - Zebrafish Gene Collection (ZGC) project"/>
        </authorList>
    </citation>
    <scope>NUCLEOTIDE SEQUENCE [LARGE SCALE MRNA]</scope>
    <source>
        <strain>SJD</strain>
        <strain>WIK</strain>
        <tissue>Embryo</tissue>
        <tissue>Olfactory epithelium</tissue>
    </source>
</reference>
<keyword id="KW-0007">Acetylation</keyword>
<keyword id="KW-0013">ADP-ribosylation</keyword>
<keyword id="KW-0158">Chromosome</keyword>
<keyword id="KW-0238">DNA-binding</keyword>
<keyword id="KW-0379">Hydroxylation</keyword>
<keyword id="KW-0488">Methylation</keyword>
<keyword id="KW-0544">Nucleosome core</keyword>
<keyword id="KW-0539">Nucleus</keyword>
<keyword id="KW-0597">Phosphoprotein</keyword>
<keyword id="KW-1185">Reference proteome</keyword>
<keyword id="KW-0832">Ubl conjugation</keyword>
<evidence type="ECO:0000250" key="1">
    <source>
        <dbReference type="UniProtKB" id="P68431"/>
    </source>
</evidence>
<evidence type="ECO:0000250" key="2">
    <source>
        <dbReference type="UniProtKB" id="P68433"/>
    </source>
</evidence>
<evidence type="ECO:0000250" key="3">
    <source>
        <dbReference type="UniProtKB" id="P84243"/>
    </source>
</evidence>
<evidence type="ECO:0000250" key="4">
    <source>
        <dbReference type="UniProtKB" id="P84244"/>
    </source>
</evidence>
<evidence type="ECO:0000250" key="5">
    <source>
        <dbReference type="UniProtKB" id="P84245"/>
    </source>
</evidence>
<evidence type="ECO:0000256" key="6">
    <source>
        <dbReference type="SAM" id="MobiDB-lite"/>
    </source>
</evidence>
<evidence type="ECO:0000305" key="7"/>
<comment type="function">
    <text evidence="3">Variant histone H3 which replaces conventional H3 in a wide range of nucleosomes in active genes. Constitutes the predominant form of histone H3 in non-dividing cells and is incorporated into chromatin independently of DNA synthesis. Deposited at sites of nucleosomal displacement throughout transcribed genes, suggesting that it represents an epigenetic imprint of transcriptionally active chromatin. Nucleosomes wrap and compact DNA into chromatin, limiting DNA accessibility to the cellular machineries which require DNA as a template. Histones thereby play a central role in transcription regulation, DNA repair, DNA replication and chromosomal stability. DNA accessibility is regulated via a complex set of post-translational modifications of histones, also called histone code, and nucleosome remodeling.</text>
</comment>
<comment type="subunit">
    <text evidence="3">The nucleosome is a histone octamer containing two molecules each of H2A, H2B, H3 and H4 assembled in one H3-H4 heterotetramer and two H2A-H2B heterodimers. The octamer wraps approximately 147 bp of DNA. Interacts with zmynd11; when trimethylated at 'Lys-36' (H3.3K36me3).</text>
</comment>
<comment type="subcellular location">
    <subcellularLocation>
        <location>Nucleus</location>
    </subcellularLocation>
    <subcellularLocation>
        <location>Chromosome</location>
    </subcellularLocation>
</comment>
<comment type="developmental stage">
    <text>Expressed during S phase, then expression strongly decreases as cell division slows down during the process of differentiation.</text>
</comment>
<comment type="domain">
    <text evidence="3">Specific interaction of trimethylated form at 'Lys-36' (H3.3K36me3) with zmynd11 is mediated by the encapsulation of Ser-32 residue with a composite pocket formed by the tandem bromo-PWWP domains.</text>
</comment>
<comment type="PTM">
    <text evidence="3">Acetylation is generally linked to gene activation. Acetylation on Lys-19 (H3K18ac) and Lys-24 (H3K24ac) favors methylation at Arg-18 (H3R17me). Acetylation at Lys-123 (H3K122ac) by EP300/p300 plays a central role in chromatin structure: localizes at the surface of the histone octamer and stimulates transcription, possibly by promoting nucleosome instability (By similarity).</text>
</comment>
<comment type="PTM">
    <text evidence="3">Asymmetric dimethylation at Arg-18 (H3R17me2a) is linked to gene activation. Asymmetric dimethylation at Arg-3 (H3R2me2a) by prmt6 is linked to gene repression and is mutually exclusive with H3 Lys-5 methylation (H3K4me2 and H3K4me3). H3R2me2a is present at the 3' of genes regardless of their transcription state and is enriched on inactive promoters, while it is absent on active promoters (By similarity).</text>
</comment>
<comment type="PTM">
    <text evidence="3">Specifically enriched in modifications associated with active chromatin such as methylation at Lys-5 (H3K4me), Lys-37 (H3K36me) and Lys-80 (H3K79me) are linked to gene activation. Methylation at Lys-5 (H3K4me) facilitates subsequent acetylation of H3 and H4. Methylation at Lys-80 (H3K79me) is associated with DNA double-strand break (DSB) responses and is a specific target for tp53bp1. Methylation at Lys-10 (H3K9me) and Lys-28 (H3K27me) are linked to gene repression. Methylation at Lys-10 (H3K9me) is a specific target for HP1 proteins (cbx1, cbx3 and cbx5) and prevents subsequent phosphorylation at Ser-11 (H3S10ph) and acetylation of H3 and H4. Methylation at Lys-5 (H3K4me) and Lys-80 (H3K79me) require preliminary monoubiquitination of H2B at 'Lys-120' (By similarity).</text>
</comment>
<comment type="PTM">
    <text evidence="3">Phosphorylated at Thr-4 (H3T3ph) by VRK1 (By similarity). Phosphorylated at Thr-4 (H3T3ph) by HASPIN during prophase and dephosphorylated during anaphase. Phosphorylation at Ser-11 (H3S10ph) by aurkb is crucial for chromosome condensation and cell-cycle progression during mitosis and meiosis. In addition phosphorylation at Ser-11 (H3S10ph) by RPS6KA4 and RPS6KA5 is important during interphase because it enables the transcription of genes following external stimulation, like mitogens, stress, growth factors or UV irradiation and result in the activation of genes, such as c-fos and c-jun. Phosphorylation at Ser-11 (H3S10ph), which is linked to gene activation, prevents methylation at Lys-10 (H3K9me) but facilitates acetylation of H3 and H4. Phosphorylation at Ser-11 (H3S10ph) by aurkb mediates the dissociation of HP1 proteins (cbx1, cbx3 and cbx5) from heterochromatin. Phosphorylation at Ser-11 (H3S10ph) is also an essential regulatory mechanism for neoplastic cell transformation. Phosphorylated at Ser-29 (H3S28ph) by map3k20 isoform 1, rps6ka5 or aurkb during mitosis or upon ultraviolet B irradiation. Phosphorylation at Thr-7 (H3T6ph) by prkcb is a specific tag for epigenetic transcriptional activation that prevents demethylation of Lys-5 (H3K4me) by lsd1/kdm1a. At centromeres, specifically phosphorylated at Thr-12 (H3T11ph) from prophase to early anaphase, by DAPK3 and PKN1. Phosphorylation at Thr-12 (H3T11ph) by PKN1 or isoform M2 of PKM (PKM2) is a specific tag for epigenetic transcriptional activation that promotes demethylation of Lys-10 (H3K9me) by kdm4c/jmjd2c. Phosphorylation at Tyr-42 (H3Y41ph) by jak2 promotes exclusion of cbx5 (HP1 alpha) from chromatin. Phosphorylation on Ser-32 (H3S31ph) is specific to regions bordering centromeres in metaphase chromosomes.</text>
</comment>
<comment type="PTM">
    <text evidence="3">Monoubiquitinated by rag1 in lymphoid cells, monoubiquitination is required for V(D)J recombination.</text>
</comment>
<comment type="PTM">
    <text evidence="3">Lysine deamination at Lys-5 (H3K4all) to form allysine only takes place on H3K4me3 and results in gene repression.</text>
</comment>
<comment type="PTM">
    <text evidence="2">Butyrylation of histones marks active promoters and competes with histone acetylation. It is present during late spermatogenesis.</text>
</comment>
<comment type="PTM">
    <text evidence="3">Succinylation at Lys-80 (H3K79succ) by KAT2A takes place with a maximum frequency around the transcription start sites of genes. It gives a specific tag for epigenetic transcription activation. Desuccinylation at Lys-123 (H3K122succ) by SIRT7 in response to DNA damage promotes chromatin condensation and double-strand breaks (DSBs) repair.</text>
</comment>
<comment type="PTM">
    <text evidence="1">Serine ADP-ribosylation constitutes the primary form of ADP-ribosylation of proteins in response to DNA damage. Serine ADP-ribosylation at Ser-11 (H3S10ADPr) is mutually exclusive with phosphorylation at Ser-11 (H3S10ph) and impairs acetylation at Lys-10 (H3K9ac).</text>
</comment>
<comment type="PTM">
    <text evidence="3">Serotonylated by TGM2 at Gln-6 (H3Q5ser) during serotonergic neuron differentiation (By similarity). H3Q5ser is associated with trimethylation of Lys-5 (H3K4me3) and enhances general transcription factor IID (TFIID) complex-binding to H3K4me3, thereby facilitating transcription (By similarity).</text>
</comment>
<comment type="PTM">
    <text evidence="3 5">Dopaminylated by TGM2 at Gln-6 (H3Q5dop) in ventral tegmental area (VTA) neurons (By similarity). H3Q5dop mediates neurotransmission-independent role of nuclear dopamine by regulating relapse-related transcriptional plasticity in the reward system (By similarity).</text>
</comment>
<comment type="PTM">
    <text evidence="3">Lactylated in macrophages by EP300/P300 by using lactoyl-CoA directly derived from endogenous or exogenous lactate, leading to stimulates gene transcription.</text>
</comment>
<comment type="similarity">
    <text evidence="7">Belongs to the histone H3 family.</text>
</comment>
<gene>
    <name type="primary">h3f3a</name>
    <name type="ORF">zgc:56193</name>
    <name type="ORF">zgc:86731</name>
</gene>
<gene>
    <name type="primary">h3f3b.1</name>
    <name type="ORF">zgc:110292</name>
</gene>
<gene>
    <name type="primary">h3-5</name>
    <name type="synonym">h3f3c</name>
    <name type="ORF">zgc:64222</name>
</gene>
<gene>
    <name type="primary">h3f3d</name>
    <name type="ORF">zgc:56418</name>
</gene>
<accession>Q6PI20</accession>
<accession>A5PL96</accession>
<accession>Q7ZV67</accession>
<feature type="initiator methionine" description="Removed" evidence="7">
    <location>
        <position position="1"/>
    </location>
</feature>
<feature type="chain" id="PRO_0000253956" description="Histone H3.3">
    <location>
        <begin position="2"/>
        <end position="136"/>
    </location>
</feature>
<feature type="region of interest" description="Disordered" evidence="6">
    <location>
        <begin position="1"/>
        <end position="43"/>
    </location>
</feature>
<feature type="site" description="Interaction with zmynd11" evidence="3">
    <location>
        <position position="32"/>
    </location>
</feature>
<feature type="modified residue" description="Asymmetric dimethylarginine; by PRMT6" evidence="3">
    <location>
        <position position="3"/>
    </location>
</feature>
<feature type="modified residue" description="Phosphothreonine; by HASPIN and VRK1" evidence="3">
    <location>
        <position position="4"/>
    </location>
</feature>
<feature type="modified residue" description="Allysine; alternate" evidence="3">
    <location>
        <position position="5"/>
    </location>
</feature>
<feature type="modified residue" description="N6,N6,N6-trimethyllysine; alternate" evidence="3">
    <location>
        <position position="5"/>
    </location>
</feature>
<feature type="modified residue" description="N6,N6-dimethyllysine; alternate" evidence="3">
    <location>
        <position position="5"/>
    </location>
</feature>
<feature type="modified residue" description="N6-(2-hydroxyisobutyryl)lysine; alternate" evidence="1">
    <location>
        <position position="5"/>
    </location>
</feature>
<feature type="modified residue" description="N6-acetyllysine; alternate" evidence="3">
    <location>
        <position position="5"/>
    </location>
</feature>
<feature type="modified residue" description="N6-methyllysine; alternate" evidence="3">
    <location>
        <position position="5"/>
    </location>
</feature>
<feature type="modified residue" description="5-glutamyl dopamine; alternate" evidence="3">
    <location>
        <position position="6"/>
    </location>
</feature>
<feature type="modified residue" description="5-glutamyl serotonin; alternate" evidence="3">
    <location>
        <position position="6"/>
    </location>
</feature>
<feature type="modified residue" description="Phosphothreonine; by PKC" evidence="3">
    <location>
        <position position="7"/>
    </location>
</feature>
<feature type="modified residue" description="N6-(2-hydroxyisobutyryl)lysine; alternate" evidence="1">
    <location>
        <position position="10"/>
    </location>
</feature>
<feature type="modified residue" description="N6-lactoyllysine; alternate" evidence="3">
    <location>
        <position position="10"/>
    </location>
</feature>
<feature type="modified residue" description="N6-methylated lysine" evidence="3">
    <location>
        <position position="10"/>
    </location>
</feature>
<feature type="modified residue" description="ADP-ribosylserine; alternate" evidence="1">
    <location>
        <position position="11"/>
    </location>
</feature>
<feature type="modified residue" description="Phosphoserine; alternate; by AURKB, AURKC, RPS6KA3, RPS6KA4 and RPS6KA5" evidence="3">
    <location>
        <position position="11"/>
    </location>
</feature>
<feature type="modified residue" description="Phosphothreonine; by PKC" evidence="3">
    <location>
        <position position="12"/>
    </location>
</feature>
<feature type="modified residue" description="N6-(2-hydroxyisobutyryl)lysine; alternate" evidence="1">
    <location>
        <position position="15"/>
    </location>
</feature>
<feature type="modified residue" description="N6-acetyllysine" evidence="3">
    <location>
        <position position="15"/>
    </location>
</feature>
<feature type="modified residue" description="N6-glutaryllysine; alternate" evidence="3">
    <location>
        <position position="15"/>
    </location>
</feature>
<feature type="modified residue" description="N6-lactoyllysine; alternate" evidence="4">
    <location>
        <position position="15"/>
    </location>
</feature>
<feature type="modified residue" description="Asymmetric dimethylarginine" evidence="3">
    <location>
        <position position="18"/>
    </location>
</feature>
<feature type="modified residue" description="N6-(2-hydroxyisobutyryl)lysine; alternate" evidence="1">
    <location>
        <position position="19"/>
    </location>
</feature>
<feature type="modified residue" description="N6-acetyllysine; alternate" evidence="3">
    <location>
        <position position="19"/>
    </location>
</feature>
<feature type="modified residue" description="N6-butyryllysine; alternate" evidence="2">
    <location>
        <position position="19"/>
    </location>
</feature>
<feature type="modified residue" description="N6-glutaryllysine; alternate" evidence="3">
    <location>
        <position position="19"/>
    </location>
</feature>
<feature type="modified residue" description="N6-lactoyllysine; alternate" evidence="3">
    <location>
        <position position="19"/>
    </location>
</feature>
<feature type="modified residue" description="N6-methylated lysine; alternate" evidence="3">
    <location>
        <position position="19"/>
    </location>
</feature>
<feature type="modified residue" description="N6-(2-hydroxyisobutyryl)lysine; alternate" evidence="1">
    <location>
        <position position="24"/>
    </location>
</feature>
<feature type="modified residue" description="N6-acetyllysine" evidence="3">
    <location>
        <position position="24"/>
    </location>
</feature>
<feature type="modified residue" description="N6-butyryllysine; alternate" evidence="2">
    <location>
        <position position="24"/>
    </location>
</feature>
<feature type="modified residue" description="N6-glutaryllysine; alternate" evidence="3">
    <location>
        <position position="24"/>
    </location>
</feature>
<feature type="modified residue" description="N6-lactoyllysine; alternate" evidence="3">
    <location>
        <position position="24"/>
    </location>
</feature>
<feature type="modified residue" description="N6-(2-hydroxyisobutyryl)lysine; alternate" evidence="1">
    <location>
        <position position="28"/>
    </location>
</feature>
<feature type="modified residue" description="N6-acetyllysine; alternate" evidence="3">
    <location>
        <position position="28"/>
    </location>
</feature>
<feature type="modified residue" description="N6-glutaryllysine; alternate" evidence="3">
    <location>
        <position position="28"/>
    </location>
</feature>
<feature type="modified residue" description="N6-lactoyllysine; alternate" evidence="3">
    <location>
        <position position="28"/>
    </location>
</feature>
<feature type="modified residue" description="N6-methylated lysine; alternate" evidence="3">
    <location>
        <position position="28"/>
    </location>
</feature>
<feature type="modified residue" description="ADP-ribosylserine; alternate" evidence="1">
    <location>
        <position position="29"/>
    </location>
</feature>
<feature type="modified residue" description="Phosphoserine; alternate; by AURKB, AURKC and RPS6KA5" evidence="3">
    <location>
        <position position="29"/>
    </location>
</feature>
<feature type="modified residue" description="N6-(2-hydroxyisobutyryl)lysine; alternate" evidence="1">
    <location>
        <position position="37"/>
    </location>
</feature>
<feature type="modified residue" description="N6-acetyllysine; alternate" evidence="3">
    <location>
        <position position="37"/>
    </location>
</feature>
<feature type="modified residue" description="N6-methylated lysine; alternate" evidence="3">
    <location>
        <position position="37"/>
    </location>
</feature>
<feature type="modified residue" description="Phosphotyrosine" evidence="3">
    <location>
        <position position="42"/>
    </location>
</feature>
<feature type="modified residue" description="N6-(2-hydroxyisobutyryl)lysine; alternate" evidence="1">
    <location>
        <position position="57"/>
    </location>
</feature>
<feature type="modified residue" description="N6-glutaryllysine; alternate" evidence="3">
    <location>
        <position position="57"/>
    </location>
</feature>
<feature type="modified residue" description="N6-lactoyllysine; alternate" evidence="4">
    <location>
        <position position="57"/>
    </location>
</feature>
<feature type="modified residue" description="N6-succinyllysine; alternate" evidence="4">
    <location>
        <position position="57"/>
    </location>
</feature>
<feature type="modified residue" description="Phosphoserine" evidence="3">
    <location>
        <position position="58"/>
    </location>
</feature>
<feature type="modified residue" description="N6-(2-hydroxyisobutyryl)lysine; alternate" evidence="1">
    <location>
        <position position="65"/>
    </location>
</feature>
<feature type="modified residue" description="N6-methylated lysine" evidence="3">
    <location>
        <position position="65"/>
    </location>
</feature>
<feature type="modified residue" description="N6-(2-hydroxyisobutyryl)lysine; alternate" evidence="1">
    <location>
        <position position="80"/>
    </location>
</feature>
<feature type="modified residue" description="N6-glutaryllysine; alternate" evidence="3">
    <location>
        <position position="80"/>
    </location>
</feature>
<feature type="modified residue" description="N6-lactoyllysine; alternate" evidence="3">
    <location>
        <position position="80"/>
    </location>
</feature>
<feature type="modified residue" description="N6-methylated lysine" evidence="3">
    <location>
        <position position="80"/>
    </location>
</feature>
<feature type="modified residue" description="N6-succinyllysine; alternate" evidence="4">
    <location>
        <position position="80"/>
    </location>
</feature>
<feature type="modified residue" description="Phosphothreonine" evidence="3">
    <location>
        <position position="81"/>
    </location>
</feature>
<feature type="modified residue" description="N6-acetyllysine; alternate" evidence="3">
    <location>
        <position position="116"/>
    </location>
</feature>
<feature type="modified residue" description="N6-glutaryllysine; alternate" evidence="3">
    <location>
        <position position="116"/>
    </location>
</feature>
<feature type="modified residue" description="N6-(2-hydroxyisobutyryl)lysine; alternate" evidence="1">
    <location>
        <position position="123"/>
    </location>
</feature>
<feature type="modified residue" description="N6-acetyllysine; alternate" evidence="3">
    <location>
        <position position="123"/>
    </location>
</feature>
<feature type="modified residue" description="N6-glutaryllysine; alternate" evidence="3">
    <location>
        <position position="123"/>
    </location>
</feature>
<feature type="modified residue" description="N6-methyllysine; alternate" evidence="3">
    <location>
        <position position="123"/>
    </location>
</feature>
<feature type="modified residue" description="N6-succinyllysine; alternate" evidence="3">
    <location>
        <position position="123"/>
    </location>
</feature>
<feature type="sequence conflict" description="In Ref. 1; AAH45982." evidence="7" ref="1">
    <original>R</original>
    <variation>G</variation>
    <location>
        <position position="50"/>
    </location>
</feature>
<sequence length="136" mass="15328">MARTKQTARKSTGGKAPRKQLATKAARKSAPSTGGVKKPHRYRPGTVALREIRRYQKSTELLIRKLPFQRLVREIAQDFKTDLRFQSAAIGALQEASEAYLVGLFEDTNLCAIHAKRVTIMPKDIQLARRIRGERA</sequence>
<proteinExistence type="evidence at transcript level"/>
<organism>
    <name type="scientific">Danio rerio</name>
    <name type="common">Zebrafish</name>
    <name type="synonym">Brachydanio rerio</name>
    <dbReference type="NCBI Taxonomy" id="7955"/>
    <lineage>
        <taxon>Eukaryota</taxon>
        <taxon>Metazoa</taxon>
        <taxon>Chordata</taxon>
        <taxon>Craniata</taxon>
        <taxon>Vertebrata</taxon>
        <taxon>Euteleostomi</taxon>
        <taxon>Actinopterygii</taxon>
        <taxon>Neopterygii</taxon>
        <taxon>Teleostei</taxon>
        <taxon>Ostariophysi</taxon>
        <taxon>Cypriniformes</taxon>
        <taxon>Danionidae</taxon>
        <taxon>Danioninae</taxon>
        <taxon>Danio</taxon>
    </lineage>
</organism>
<protein>
    <recommendedName>
        <fullName>Histone H3.3</fullName>
    </recommendedName>
</protein>